<protein>
    <recommendedName>
        <fullName evidence="1">UPF0102 protein CbuK_0265</fullName>
    </recommendedName>
</protein>
<gene>
    <name type="ordered locus">CbuK_0265</name>
</gene>
<evidence type="ECO:0000255" key="1">
    <source>
        <dbReference type="HAMAP-Rule" id="MF_00048"/>
    </source>
</evidence>
<reference key="1">
    <citation type="journal article" date="2009" name="Infect. Immun.">
        <title>Comparative genomics reveal extensive transposon-mediated genomic plasticity and diversity among potential effector proteins within the genus Coxiella.</title>
        <authorList>
            <person name="Beare P.A."/>
            <person name="Unsworth N."/>
            <person name="Andoh M."/>
            <person name="Voth D.E."/>
            <person name="Omsland A."/>
            <person name="Gilk S.D."/>
            <person name="Williams K.P."/>
            <person name="Sobral B.W."/>
            <person name="Kupko J.J. III"/>
            <person name="Porcella S.F."/>
            <person name="Samuel J.E."/>
            <person name="Heinzen R.A."/>
        </authorList>
    </citation>
    <scope>NUCLEOTIDE SEQUENCE [LARGE SCALE GENOMIC DNA]</scope>
    <source>
        <strain>CbuK_Q154</strain>
    </source>
</reference>
<feature type="chain" id="PRO_1000091235" description="UPF0102 protein CbuK_0265">
    <location>
        <begin position="1"/>
        <end position="120"/>
    </location>
</feature>
<comment type="similarity">
    <text evidence="1">Belongs to the UPF0102 family.</text>
</comment>
<accession>B6J4R1</accession>
<dbReference type="EMBL" id="CP001020">
    <property type="protein sequence ID" value="ACJ19576.1"/>
    <property type="molecule type" value="Genomic_DNA"/>
</dbReference>
<dbReference type="RefSeq" id="WP_005770436.1">
    <property type="nucleotide sequence ID" value="NC_011528.1"/>
</dbReference>
<dbReference type="SMR" id="B6J4R1"/>
<dbReference type="KEGG" id="cbc:CbuK_0265"/>
<dbReference type="HOGENOM" id="CLU_115353_1_0_6"/>
<dbReference type="GO" id="GO:0003676">
    <property type="term" value="F:nucleic acid binding"/>
    <property type="evidence" value="ECO:0007669"/>
    <property type="project" value="InterPro"/>
</dbReference>
<dbReference type="Gene3D" id="3.40.1350.10">
    <property type="match status" value="1"/>
</dbReference>
<dbReference type="HAMAP" id="MF_00048">
    <property type="entry name" value="UPF0102"/>
    <property type="match status" value="1"/>
</dbReference>
<dbReference type="InterPro" id="IPR011335">
    <property type="entry name" value="Restrct_endonuc-II-like"/>
</dbReference>
<dbReference type="InterPro" id="IPR011856">
    <property type="entry name" value="tRNA_endonuc-like_dom_sf"/>
</dbReference>
<dbReference type="InterPro" id="IPR003509">
    <property type="entry name" value="UPF0102_YraN-like"/>
</dbReference>
<dbReference type="NCBIfam" id="NF009150">
    <property type="entry name" value="PRK12497.1-3"/>
    <property type="match status" value="1"/>
</dbReference>
<dbReference type="NCBIfam" id="NF011277">
    <property type="entry name" value="PRK14684.1"/>
    <property type="match status" value="1"/>
</dbReference>
<dbReference type="NCBIfam" id="TIGR00252">
    <property type="entry name" value="YraN family protein"/>
    <property type="match status" value="1"/>
</dbReference>
<dbReference type="PANTHER" id="PTHR34039">
    <property type="entry name" value="UPF0102 PROTEIN YRAN"/>
    <property type="match status" value="1"/>
</dbReference>
<dbReference type="PANTHER" id="PTHR34039:SF1">
    <property type="entry name" value="UPF0102 PROTEIN YRAN"/>
    <property type="match status" value="1"/>
</dbReference>
<dbReference type="Pfam" id="PF02021">
    <property type="entry name" value="UPF0102"/>
    <property type="match status" value="1"/>
</dbReference>
<dbReference type="SUPFAM" id="SSF52980">
    <property type="entry name" value="Restriction endonuclease-like"/>
    <property type="match status" value="1"/>
</dbReference>
<name>Y265_COXB1</name>
<sequence length="120" mass="14287">MFSLTQKIGFNAEKTACRYLQKQGLSFITKNFRYKQGEIDLIMSDQSILVFIEVRYRRFSDFIHPVATVTPLKQRRLIKTELHYLQKHRLLDKISCRFDIVGITADRQITWIKNAIEVEY</sequence>
<proteinExistence type="inferred from homology"/>
<organism>
    <name type="scientific">Coxiella burnetii (strain CbuK_Q154)</name>
    <name type="common">Coxiella burnetii (strain Q154)</name>
    <dbReference type="NCBI Taxonomy" id="434924"/>
    <lineage>
        <taxon>Bacteria</taxon>
        <taxon>Pseudomonadati</taxon>
        <taxon>Pseudomonadota</taxon>
        <taxon>Gammaproteobacteria</taxon>
        <taxon>Legionellales</taxon>
        <taxon>Coxiellaceae</taxon>
        <taxon>Coxiella</taxon>
    </lineage>
</organism>